<evidence type="ECO:0000250" key="1"/>
<evidence type="ECO:0000255" key="2"/>
<evidence type="ECO:0000305" key="3"/>
<dbReference type="EMBL" id="AY008264">
    <property type="protein sequence ID" value="AAG22118.1"/>
    <property type="molecule type" value="Genomic_DNA"/>
</dbReference>
<dbReference type="RefSeq" id="WP_005169550.1">
    <property type="nucleotide sequence ID" value="NZ_NWMR01000001.1"/>
</dbReference>
<dbReference type="SMR" id="Q9F4G9"/>
<dbReference type="STRING" id="1443113.LC20_02849"/>
<dbReference type="KEGG" id="yew:CH47_1548"/>
<dbReference type="eggNOG" id="COG3768">
    <property type="taxonomic scope" value="Bacteria"/>
</dbReference>
<dbReference type="GO" id="GO:0005886">
    <property type="term" value="C:plasma membrane"/>
    <property type="evidence" value="ECO:0007669"/>
    <property type="project" value="UniProtKB-SubCell"/>
</dbReference>
<dbReference type="HAMAP" id="MF_01085">
    <property type="entry name" value="UPF0283"/>
    <property type="match status" value="1"/>
</dbReference>
<dbReference type="InterPro" id="IPR021147">
    <property type="entry name" value="DUF697"/>
</dbReference>
<dbReference type="InterPro" id="IPR006507">
    <property type="entry name" value="UPF0283"/>
</dbReference>
<dbReference type="NCBIfam" id="TIGR01620">
    <property type="entry name" value="hyp_HI0043"/>
    <property type="match status" value="1"/>
</dbReference>
<dbReference type="PANTHER" id="PTHR39342">
    <property type="entry name" value="UPF0283 MEMBRANE PROTEIN YCJF"/>
    <property type="match status" value="1"/>
</dbReference>
<dbReference type="PANTHER" id="PTHR39342:SF1">
    <property type="entry name" value="UPF0283 MEMBRANE PROTEIN YCJF"/>
    <property type="match status" value="1"/>
</dbReference>
<dbReference type="Pfam" id="PF05128">
    <property type="entry name" value="DUF697"/>
    <property type="match status" value="1"/>
</dbReference>
<keyword id="KW-0997">Cell inner membrane</keyword>
<keyword id="KW-1003">Cell membrane</keyword>
<keyword id="KW-0472">Membrane</keyword>
<keyword id="KW-0812">Transmembrane</keyword>
<keyword id="KW-1133">Transmembrane helix</keyword>
<protein>
    <recommendedName>
        <fullName>UPF0283 protein YcjF</fullName>
    </recommendedName>
</protein>
<reference key="1">
    <citation type="journal article" date="2001" name="Mol. Microbiol.">
        <title>The psp locus of Yersinia enterocolitica is required for virulence and for growth in vitro when the Ysc type III secretion system is produced.</title>
        <authorList>
            <person name="Darwin A.J."/>
            <person name="Miller V.L."/>
        </authorList>
    </citation>
    <scope>NUCLEOTIDE SEQUENCE [GENOMIC DNA]</scope>
    <source>
        <strain>JB580v / Serotype O:8</strain>
    </source>
</reference>
<sequence length="354" mass="39416">MSEPLKPRIDFEQPLQPIDEPVLKAAQAFDQHAAENFYPADPELDAENEEGRVEGLVNAALKPKRSLWRKMVTVGIALFGVSVIAQSVQWVNQAWQQQDWIALGATTAGGLIVLAGVGSVVTEWRRLYRLRQRAEERDIARELLVSHGIGQGRAFCEKLARQAGLDQGHPALQRWQASLHETHNDREVVELYAKLVQPSLDNLARAEISRYAAESALMIAVSPLALVDMAFIAWRNIRLINRIAALYGIELGYFSRIRLFRLVLLNIAFAGASELVREVGMDWLSQDLAARLSARAAQGIGAGLLTARLGIKAMELCRPLPWLGDDKPKLGDFRRQLIGQLKNTLPKKDKPAQQ</sequence>
<organism>
    <name type="scientific">Yersinia enterocolitica</name>
    <dbReference type="NCBI Taxonomy" id="630"/>
    <lineage>
        <taxon>Bacteria</taxon>
        <taxon>Pseudomonadati</taxon>
        <taxon>Pseudomonadota</taxon>
        <taxon>Gammaproteobacteria</taxon>
        <taxon>Enterobacterales</taxon>
        <taxon>Yersiniaceae</taxon>
        <taxon>Yersinia</taxon>
    </lineage>
</organism>
<accession>Q9F4G9</accession>
<comment type="subcellular location">
    <subcellularLocation>
        <location evidence="1">Cell inner membrane</location>
        <topology evidence="1">Multi-pass membrane protein</topology>
    </subcellularLocation>
</comment>
<comment type="similarity">
    <text evidence="3">Belongs to the UPF0283 family.</text>
</comment>
<proteinExistence type="inferred from homology"/>
<feature type="chain" id="PRO_0000214191" description="UPF0283 protein YcjF">
    <location>
        <begin position="1"/>
        <end position="354"/>
    </location>
</feature>
<feature type="transmembrane region" description="Helical" evidence="2">
    <location>
        <begin position="71"/>
        <end position="91"/>
    </location>
</feature>
<feature type="transmembrane region" description="Helical" evidence="2">
    <location>
        <begin position="101"/>
        <end position="121"/>
    </location>
</feature>
<feature type="transmembrane region" description="Helical" evidence="2">
    <location>
        <begin position="214"/>
        <end position="234"/>
    </location>
</feature>
<name>YCJF_YEREN</name>
<gene>
    <name type="primary">ycjF</name>
</gene>